<feature type="chain" id="PRO_0000303629" description="tRNA N6-adenosine threonylcarbamoyltransferase">
    <location>
        <begin position="1"/>
        <end position="363"/>
    </location>
</feature>
<feature type="binding site" evidence="1">
    <location>
        <position position="127"/>
    </location>
    <ligand>
        <name>Fe cation</name>
        <dbReference type="ChEBI" id="CHEBI:24875"/>
    </ligand>
</feature>
<feature type="binding site" evidence="1">
    <location>
        <position position="131"/>
    </location>
    <ligand>
        <name>Fe cation</name>
        <dbReference type="ChEBI" id="CHEBI:24875"/>
    </ligand>
</feature>
<feature type="binding site" evidence="1">
    <location>
        <begin position="150"/>
        <end position="154"/>
    </location>
    <ligand>
        <name>substrate</name>
    </ligand>
</feature>
<feature type="binding site" evidence="1">
    <location>
        <position position="183"/>
    </location>
    <ligand>
        <name>substrate</name>
    </ligand>
</feature>
<feature type="binding site" evidence="1">
    <location>
        <position position="196"/>
    </location>
    <ligand>
        <name>substrate</name>
    </ligand>
</feature>
<feature type="binding site" evidence="1">
    <location>
        <position position="290"/>
    </location>
    <ligand>
        <name>substrate</name>
    </ligand>
</feature>
<feature type="binding site" evidence="1">
    <location>
        <position position="318"/>
    </location>
    <ligand>
        <name>Fe cation</name>
        <dbReference type="ChEBI" id="CHEBI:24875"/>
    </ligand>
</feature>
<protein>
    <recommendedName>
        <fullName evidence="1">tRNA N6-adenosine threonylcarbamoyltransferase</fullName>
        <ecNumber evidence="1">2.3.1.234</ecNumber>
    </recommendedName>
    <alternativeName>
        <fullName evidence="1">N6-L-threonylcarbamoyladenine synthase</fullName>
        <shortName evidence="1">t(6)A synthase</shortName>
    </alternativeName>
    <alternativeName>
        <fullName evidence="1">t(6)A37 threonylcarbamoyladenosine biosynthesis protein TsaD</fullName>
    </alternativeName>
    <alternativeName>
        <fullName evidence="1">tRNA threonylcarbamoyladenosine biosynthesis protein TsaD</fullName>
    </alternativeName>
</protein>
<comment type="function">
    <text evidence="1">Required for the formation of a threonylcarbamoyl group on adenosine at position 37 (t(6)A37) in tRNAs that read codons beginning with adenine. Is involved in the transfer of the threonylcarbamoyl moiety of threonylcarbamoyl-AMP (TC-AMP) to the N6 group of A37, together with TsaE and TsaB. TsaD likely plays a direct catalytic role in this reaction.</text>
</comment>
<comment type="catalytic activity">
    <reaction evidence="1">
        <text>L-threonylcarbamoyladenylate + adenosine(37) in tRNA = N(6)-L-threonylcarbamoyladenosine(37) in tRNA + AMP + H(+)</text>
        <dbReference type="Rhea" id="RHEA:37059"/>
        <dbReference type="Rhea" id="RHEA-COMP:10162"/>
        <dbReference type="Rhea" id="RHEA-COMP:10163"/>
        <dbReference type="ChEBI" id="CHEBI:15378"/>
        <dbReference type="ChEBI" id="CHEBI:73682"/>
        <dbReference type="ChEBI" id="CHEBI:74411"/>
        <dbReference type="ChEBI" id="CHEBI:74418"/>
        <dbReference type="ChEBI" id="CHEBI:456215"/>
        <dbReference type="EC" id="2.3.1.234"/>
    </reaction>
</comment>
<comment type="cofactor">
    <cofactor evidence="1">
        <name>Fe(2+)</name>
        <dbReference type="ChEBI" id="CHEBI:29033"/>
    </cofactor>
    <text evidence="1">Binds 1 Fe(2+) ion per subunit.</text>
</comment>
<comment type="subcellular location">
    <subcellularLocation>
        <location evidence="1">Cytoplasm</location>
    </subcellularLocation>
</comment>
<comment type="similarity">
    <text evidence="1">Belongs to the KAE1 / TsaD family.</text>
</comment>
<organism>
    <name type="scientific">Zymomonas mobilis subsp. mobilis (strain ATCC 31821 / ZM4 / CP4)</name>
    <dbReference type="NCBI Taxonomy" id="264203"/>
    <lineage>
        <taxon>Bacteria</taxon>
        <taxon>Pseudomonadati</taxon>
        <taxon>Pseudomonadota</taxon>
        <taxon>Alphaproteobacteria</taxon>
        <taxon>Sphingomonadales</taxon>
        <taxon>Zymomonadaceae</taxon>
        <taxon>Zymomonas</taxon>
    </lineage>
</organism>
<gene>
    <name evidence="1" type="primary">tsaD</name>
    <name type="synonym">gcp</name>
    <name type="ordered locus">ZMO1904</name>
</gene>
<sequence>MIVALPPLMVAEKPPMALVLGLESSCDETAVALVDNDGNIISSHLATQEILHRPYGGVVPEIAARAHVERLEPLVRKVLNESGKNLSEIDAIAATAGPGLIGGVMVGFVTGKALSLACKKPLIAINHLEGHALTPRLADKTLSFPYLLLLISGGHCQILLVKNVGEYRRLATTIDDAGGEAFDKTAKILGLGFPGGPAVEREALNGDPMAVPLPRPLIKSKEPHFSFAGLKTAVLRAYQSGIYKRHDIAASFQQAVIDCLVNRSEKALKKIEGENIQINAFVIAGGMAANQAIRPALTDLAEAHNLPLIAPPPSLCTDNGAMIAWAGVERFRLGMIDNLESPARARWPLDPHAEKARGAGVKA</sequence>
<reference key="1">
    <citation type="journal article" date="2005" name="Nat. Biotechnol.">
        <title>The genome sequence of the ethanologenic bacterium Zymomonas mobilis ZM4.</title>
        <authorList>
            <person name="Seo J.-S."/>
            <person name="Chong H."/>
            <person name="Park H.S."/>
            <person name="Yoon K.-O."/>
            <person name="Jung C."/>
            <person name="Kim J.J."/>
            <person name="Hong J.H."/>
            <person name="Kim H."/>
            <person name="Kim J.-H."/>
            <person name="Kil J.-I."/>
            <person name="Park C.J."/>
            <person name="Oh H.-M."/>
            <person name="Lee J.-S."/>
            <person name="Jin S.-J."/>
            <person name="Um H.-W."/>
            <person name="Lee H.-J."/>
            <person name="Oh S.-J."/>
            <person name="Kim J.Y."/>
            <person name="Kang H.L."/>
            <person name="Lee S.Y."/>
            <person name="Lee K.J."/>
            <person name="Kang H.S."/>
        </authorList>
    </citation>
    <scope>NUCLEOTIDE SEQUENCE [LARGE SCALE GENOMIC DNA]</scope>
    <source>
        <strain>ATCC 31821 / ZM4 / CP4</strain>
    </source>
</reference>
<evidence type="ECO:0000255" key="1">
    <source>
        <dbReference type="HAMAP-Rule" id="MF_01445"/>
    </source>
</evidence>
<keyword id="KW-0012">Acyltransferase</keyword>
<keyword id="KW-0963">Cytoplasm</keyword>
<keyword id="KW-0408">Iron</keyword>
<keyword id="KW-0479">Metal-binding</keyword>
<keyword id="KW-1185">Reference proteome</keyword>
<keyword id="KW-0808">Transferase</keyword>
<keyword id="KW-0819">tRNA processing</keyword>
<dbReference type="EC" id="2.3.1.234" evidence="1"/>
<dbReference type="EMBL" id="AE008692">
    <property type="protein sequence ID" value="AAV90528.1"/>
    <property type="molecule type" value="Genomic_DNA"/>
</dbReference>
<dbReference type="SMR" id="Q5NL82"/>
<dbReference type="STRING" id="264203.ZMO1904"/>
<dbReference type="KEGG" id="zmo:ZMO1904"/>
<dbReference type="eggNOG" id="COG0533">
    <property type="taxonomic scope" value="Bacteria"/>
</dbReference>
<dbReference type="HOGENOM" id="CLU_023208_0_2_5"/>
<dbReference type="Proteomes" id="UP000001173">
    <property type="component" value="Chromosome"/>
</dbReference>
<dbReference type="GO" id="GO:0005737">
    <property type="term" value="C:cytoplasm"/>
    <property type="evidence" value="ECO:0007669"/>
    <property type="project" value="UniProtKB-SubCell"/>
</dbReference>
<dbReference type="GO" id="GO:0005506">
    <property type="term" value="F:iron ion binding"/>
    <property type="evidence" value="ECO:0007669"/>
    <property type="project" value="UniProtKB-UniRule"/>
</dbReference>
<dbReference type="GO" id="GO:0061711">
    <property type="term" value="F:N(6)-L-threonylcarbamoyladenine synthase activity"/>
    <property type="evidence" value="ECO:0007669"/>
    <property type="project" value="UniProtKB-EC"/>
</dbReference>
<dbReference type="GO" id="GO:0002949">
    <property type="term" value="P:tRNA threonylcarbamoyladenosine modification"/>
    <property type="evidence" value="ECO:0007669"/>
    <property type="project" value="UniProtKB-UniRule"/>
</dbReference>
<dbReference type="CDD" id="cd24133">
    <property type="entry name" value="ASKHA_NBD_TsaD_bac"/>
    <property type="match status" value="1"/>
</dbReference>
<dbReference type="FunFam" id="3.30.420.40:FF:000012">
    <property type="entry name" value="tRNA N6-adenosine threonylcarbamoyltransferase"/>
    <property type="match status" value="1"/>
</dbReference>
<dbReference type="Gene3D" id="3.30.420.40">
    <property type="match status" value="2"/>
</dbReference>
<dbReference type="HAMAP" id="MF_01445">
    <property type="entry name" value="TsaD"/>
    <property type="match status" value="1"/>
</dbReference>
<dbReference type="InterPro" id="IPR043129">
    <property type="entry name" value="ATPase_NBD"/>
</dbReference>
<dbReference type="InterPro" id="IPR000905">
    <property type="entry name" value="Gcp-like_dom"/>
</dbReference>
<dbReference type="InterPro" id="IPR017861">
    <property type="entry name" value="KAE1/TsaD"/>
</dbReference>
<dbReference type="InterPro" id="IPR022450">
    <property type="entry name" value="TsaD"/>
</dbReference>
<dbReference type="NCBIfam" id="TIGR00329">
    <property type="entry name" value="gcp_kae1"/>
    <property type="match status" value="1"/>
</dbReference>
<dbReference type="NCBIfam" id="TIGR03723">
    <property type="entry name" value="T6A_TsaD_YgjD"/>
    <property type="match status" value="1"/>
</dbReference>
<dbReference type="PANTHER" id="PTHR11735">
    <property type="entry name" value="TRNA N6-ADENOSINE THREONYLCARBAMOYLTRANSFERASE"/>
    <property type="match status" value="1"/>
</dbReference>
<dbReference type="PANTHER" id="PTHR11735:SF6">
    <property type="entry name" value="TRNA N6-ADENOSINE THREONYLCARBAMOYLTRANSFERASE, MITOCHONDRIAL"/>
    <property type="match status" value="1"/>
</dbReference>
<dbReference type="Pfam" id="PF00814">
    <property type="entry name" value="TsaD"/>
    <property type="match status" value="1"/>
</dbReference>
<dbReference type="PRINTS" id="PR00789">
    <property type="entry name" value="OSIALOPTASE"/>
</dbReference>
<dbReference type="SUPFAM" id="SSF53067">
    <property type="entry name" value="Actin-like ATPase domain"/>
    <property type="match status" value="1"/>
</dbReference>
<accession>Q5NL82</accession>
<name>TSAD_ZYMMO</name>
<proteinExistence type="inferred from homology"/>